<gene>
    <name type="primary">lkb1</name>
    <name type="ORF">DDB_G0279629</name>
</gene>
<organism>
    <name type="scientific">Dictyostelium discoideum</name>
    <name type="common">Social amoeba</name>
    <dbReference type="NCBI Taxonomy" id="44689"/>
    <lineage>
        <taxon>Eukaryota</taxon>
        <taxon>Amoebozoa</taxon>
        <taxon>Evosea</taxon>
        <taxon>Eumycetozoa</taxon>
        <taxon>Dictyostelia</taxon>
        <taxon>Dictyosteliales</taxon>
        <taxon>Dictyosteliaceae</taxon>
        <taxon>Dictyostelium</taxon>
    </lineage>
</organism>
<reference key="1">
    <citation type="journal article" date="2005" name="Nature">
        <title>The genome of the social amoeba Dictyostelium discoideum.</title>
        <authorList>
            <person name="Eichinger L."/>
            <person name="Pachebat J.A."/>
            <person name="Gloeckner G."/>
            <person name="Rajandream M.A."/>
            <person name="Sucgang R."/>
            <person name="Berriman M."/>
            <person name="Song J."/>
            <person name="Olsen R."/>
            <person name="Szafranski K."/>
            <person name="Xu Q."/>
            <person name="Tunggal B."/>
            <person name="Kummerfeld S."/>
            <person name="Madera M."/>
            <person name="Konfortov B.A."/>
            <person name="Rivero F."/>
            <person name="Bankier A.T."/>
            <person name="Lehmann R."/>
            <person name="Hamlin N."/>
            <person name="Davies R."/>
            <person name="Gaudet P."/>
            <person name="Fey P."/>
            <person name="Pilcher K."/>
            <person name="Chen G."/>
            <person name="Saunders D."/>
            <person name="Sodergren E.J."/>
            <person name="Davis P."/>
            <person name="Kerhornou A."/>
            <person name="Nie X."/>
            <person name="Hall N."/>
            <person name="Anjard C."/>
            <person name="Hemphill L."/>
            <person name="Bason N."/>
            <person name="Farbrother P."/>
            <person name="Desany B."/>
            <person name="Just E."/>
            <person name="Morio T."/>
            <person name="Rost R."/>
            <person name="Churcher C.M."/>
            <person name="Cooper J."/>
            <person name="Haydock S."/>
            <person name="van Driessche N."/>
            <person name="Cronin A."/>
            <person name="Goodhead I."/>
            <person name="Muzny D.M."/>
            <person name="Mourier T."/>
            <person name="Pain A."/>
            <person name="Lu M."/>
            <person name="Harper D."/>
            <person name="Lindsay R."/>
            <person name="Hauser H."/>
            <person name="James K.D."/>
            <person name="Quiles M."/>
            <person name="Madan Babu M."/>
            <person name="Saito T."/>
            <person name="Buchrieser C."/>
            <person name="Wardroper A."/>
            <person name="Felder M."/>
            <person name="Thangavelu M."/>
            <person name="Johnson D."/>
            <person name="Knights A."/>
            <person name="Loulseged H."/>
            <person name="Mungall K.L."/>
            <person name="Oliver K."/>
            <person name="Price C."/>
            <person name="Quail M.A."/>
            <person name="Urushihara H."/>
            <person name="Hernandez J."/>
            <person name="Rabbinowitsch E."/>
            <person name="Steffen D."/>
            <person name="Sanders M."/>
            <person name="Ma J."/>
            <person name="Kohara Y."/>
            <person name="Sharp S."/>
            <person name="Simmonds M.N."/>
            <person name="Spiegler S."/>
            <person name="Tivey A."/>
            <person name="Sugano S."/>
            <person name="White B."/>
            <person name="Walker D."/>
            <person name="Woodward J.R."/>
            <person name="Winckler T."/>
            <person name="Tanaka Y."/>
            <person name="Shaulsky G."/>
            <person name="Schleicher M."/>
            <person name="Weinstock G.M."/>
            <person name="Rosenthal A."/>
            <person name="Cox E.C."/>
            <person name="Chisholm R.L."/>
            <person name="Gibbs R.A."/>
            <person name="Loomis W.F."/>
            <person name="Platzer M."/>
            <person name="Kay R.R."/>
            <person name="Williams J.G."/>
            <person name="Dear P.H."/>
            <person name="Noegel A.A."/>
            <person name="Barrell B.G."/>
            <person name="Kuspa A."/>
        </authorList>
    </citation>
    <scope>NUCLEOTIDE SEQUENCE [LARGE SCALE GENOMIC DNA]</scope>
    <source>
        <strain>AX4</strain>
    </source>
</reference>
<keyword id="KW-0067">ATP-binding</keyword>
<keyword id="KW-0418">Kinase</keyword>
<keyword id="KW-0460">Magnesium</keyword>
<keyword id="KW-0464">Manganese</keyword>
<keyword id="KW-0479">Metal-binding</keyword>
<keyword id="KW-0547">Nucleotide-binding</keyword>
<keyword id="KW-1185">Reference proteome</keyword>
<keyword id="KW-0723">Serine/threonine-protein kinase</keyword>
<keyword id="KW-0808">Transferase</keyword>
<comment type="function">
    <text evidence="1">Serine/threonine-protein kinase that controls the activity of AMP-activated protein kinase (AMPK) family members, thereby playing a role in various processes such as cell metabolism, cell polarity, apoptosis and DNA damage response. Acts by phosphorylating the T-loop of AMPK family proteins, leading to promote their activity (By similarity).</text>
</comment>
<comment type="catalytic activity">
    <reaction>
        <text>L-seryl-[protein] + ATP = O-phospho-L-seryl-[protein] + ADP + H(+)</text>
        <dbReference type="Rhea" id="RHEA:17989"/>
        <dbReference type="Rhea" id="RHEA-COMP:9863"/>
        <dbReference type="Rhea" id="RHEA-COMP:11604"/>
        <dbReference type="ChEBI" id="CHEBI:15378"/>
        <dbReference type="ChEBI" id="CHEBI:29999"/>
        <dbReference type="ChEBI" id="CHEBI:30616"/>
        <dbReference type="ChEBI" id="CHEBI:83421"/>
        <dbReference type="ChEBI" id="CHEBI:456216"/>
        <dbReference type="EC" id="2.7.11.1"/>
    </reaction>
</comment>
<comment type="catalytic activity">
    <reaction>
        <text>L-threonyl-[protein] + ATP = O-phospho-L-threonyl-[protein] + ADP + H(+)</text>
        <dbReference type="Rhea" id="RHEA:46608"/>
        <dbReference type="Rhea" id="RHEA-COMP:11060"/>
        <dbReference type="Rhea" id="RHEA-COMP:11605"/>
        <dbReference type="ChEBI" id="CHEBI:15378"/>
        <dbReference type="ChEBI" id="CHEBI:30013"/>
        <dbReference type="ChEBI" id="CHEBI:30616"/>
        <dbReference type="ChEBI" id="CHEBI:61977"/>
        <dbReference type="ChEBI" id="CHEBI:456216"/>
        <dbReference type="EC" id="2.7.11.1"/>
    </reaction>
</comment>
<comment type="cofactor">
    <cofactor evidence="1">
        <name>Mg(2+)</name>
        <dbReference type="ChEBI" id="CHEBI:18420"/>
    </cofactor>
    <cofactor evidence="1">
        <name>Mn(2+)</name>
        <dbReference type="ChEBI" id="CHEBI:29035"/>
    </cofactor>
</comment>
<comment type="similarity">
    <text evidence="5">Belongs to the protein kinase superfamily. CAMK Ser/Thr protein kinase family. LKB1 subfamily.</text>
</comment>
<sequence>MEVEQQPSYTSNFIIHLNENEDNGISYRSRKSTPKLVKHYILGEVLGEGAYGKVKDGMDSFTQKRVAVKILKRARLKKIPGGEASVLKEINITKKLHNKHIIKLIDHFIIEEKGKLYIVYEYVGGGTSQNILENAPNGRLPPHQSQFIFRQLIEACEYIHSQKILHRDIKPDNILFTHANVLKLSDFGVAEDSSQLEDFECLSRSYGSPAFQPPELTQFQTTFSPFKIDIWAMGVTLYLMTIGKFPFSGANMFVLFENISKCKIEFPNDLDKDLVNLIKGILQVDHIQRFSLGQIKNHPWCIKYIPEVEPFVPLLEESKFLPLEMAYGDDEGDDGGGGRGGGGDDELIFGYENDGNTIDLQDPEYIPSISVGDQPPSTPILHSSDHHHHHHHNNQHQHQQQQQQLQQSQQFHGNGDNNLLFDSNNNLIFDSNNNLLFNTNNNEHLINGLPVHPIELDPVNIKKSSIGTNISDVALIRENYICSDNDASSGQDDEDYSDDNEISGEDLNPTNHHHHRADRVGSRDKSSRSSKRKNSSSNNNNNNSTSPKVEFNPNRSSPQPPLRNSSNRRPKITFESPHNKSKCIIN</sequence>
<feature type="chain" id="PRO_0000358899" description="Serine/threonine-protein kinase stk11 homolog">
    <location>
        <begin position="1"/>
        <end position="586"/>
    </location>
</feature>
<feature type="domain" description="Protein kinase" evidence="2">
    <location>
        <begin position="40"/>
        <end position="301"/>
    </location>
</feature>
<feature type="region of interest" description="Disordered" evidence="4">
    <location>
        <begin position="326"/>
        <end position="418"/>
    </location>
</feature>
<feature type="region of interest" description="Disordered" evidence="4">
    <location>
        <begin position="484"/>
        <end position="586"/>
    </location>
</feature>
<feature type="compositionally biased region" description="Basic residues" evidence="4">
    <location>
        <begin position="385"/>
        <end position="395"/>
    </location>
</feature>
<feature type="compositionally biased region" description="Low complexity" evidence="4">
    <location>
        <begin position="396"/>
        <end position="418"/>
    </location>
</feature>
<feature type="compositionally biased region" description="Acidic residues" evidence="4">
    <location>
        <begin position="491"/>
        <end position="504"/>
    </location>
</feature>
<feature type="compositionally biased region" description="Basic and acidic residues" evidence="4">
    <location>
        <begin position="518"/>
        <end position="527"/>
    </location>
</feature>
<feature type="compositionally biased region" description="Low complexity" evidence="4">
    <location>
        <begin position="535"/>
        <end position="544"/>
    </location>
</feature>
<feature type="compositionally biased region" description="Polar residues" evidence="4">
    <location>
        <begin position="553"/>
        <end position="565"/>
    </location>
</feature>
<feature type="active site" description="Proton acceptor" evidence="2 3">
    <location>
        <position position="168"/>
    </location>
</feature>
<feature type="binding site" evidence="2">
    <location>
        <begin position="46"/>
        <end position="54"/>
    </location>
    <ligand>
        <name>ATP</name>
        <dbReference type="ChEBI" id="CHEBI:30616"/>
    </ligand>
</feature>
<feature type="binding site" evidence="2">
    <location>
        <position position="69"/>
    </location>
    <ligand>
        <name>ATP</name>
        <dbReference type="ChEBI" id="CHEBI:30616"/>
    </ligand>
</feature>
<proteinExistence type="inferred from homology"/>
<protein>
    <recommendedName>
        <fullName>Serine/threonine-protein kinase stk11 homolog</fullName>
        <ecNumber>2.7.11.1</ecNumber>
    </recommendedName>
    <alternativeName>
        <fullName>Liver kinase B1 homolog</fullName>
        <shortName>lkb1</shortName>
    </alternativeName>
</protein>
<accession>Q54WJ0</accession>
<dbReference type="EC" id="2.7.11.1"/>
<dbReference type="EMBL" id="AAFI02000032">
    <property type="protein sequence ID" value="EAL67589.1"/>
    <property type="molecule type" value="Genomic_DNA"/>
</dbReference>
<dbReference type="RefSeq" id="XP_641563.1">
    <property type="nucleotide sequence ID" value="XM_636471.1"/>
</dbReference>
<dbReference type="SMR" id="Q54WJ0"/>
<dbReference type="FunCoup" id="Q54WJ0">
    <property type="interactions" value="7"/>
</dbReference>
<dbReference type="STRING" id="44689.Q54WJ0"/>
<dbReference type="PaxDb" id="44689-DDB0229349"/>
<dbReference type="EnsemblProtists" id="EAL67589">
    <property type="protein sequence ID" value="EAL67589"/>
    <property type="gene ID" value="DDB_G0279629"/>
</dbReference>
<dbReference type="GeneID" id="8622138"/>
<dbReference type="KEGG" id="ddi:DDB_G0279629"/>
<dbReference type="dictyBase" id="DDB_G0279629">
    <property type="gene designation" value="lkb1"/>
</dbReference>
<dbReference type="VEuPathDB" id="AmoebaDB:DDB_G0279629"/>
<dbReference type="eggNOG" id="KOG0583">
    <property type="taxonomic scope" value="Eukaryota"/>
</dbReference>
<dbReference type="HOGENOM" id="CLU_465740_0_0_1"/>
<dbReference type="InParanoid" id="Q54WJ0"/>
<dbReference type="OMA" id="IHLNENE"/>
<dbReference type="PhylomeDB" id="Q54WJ0"/>
<dbReference type="PRO" id="PR:Q54WJ0"/>
<dbReference type="Proteomes" id="UP000002195">
    <property type="component" value="Chromosome 3"/>
</dbReference>
<dbReference type="GO" id="GO:0005524">
    <property type="term" value="F:ATP binding"/>
    <property type="evidence" value="ECO:0007669"/>
    <property type="project" value="UniProtKB-KW"/>
</dbReference>
<dbReference type="GO" id="GO:0046872">
    <property type="term" value="F:metal ion binding"/>
    <property type="evidence" value="ECO:0007669"/>
    <property type="project" value="UniProtKB-KW"/>
</dbReference>
<dbReference type="GO" id="GO:0030295">
    <property type="term" value="F:protein kinase activator activity"/>
    <property type="evidence" value="ECO:0000315"/>
    <property type="project" value="dictyBase"/>
</dbReference>
<dbReference type="GO" id="GO:0004672">
    <property type="term" value="F:protein kinase activity"/>
    <property type="evidence" value="ECO:0000314"/>
    <property type="project" value="dictyBase"/>
</dbReference>
<dbReference type="GO" id="GO:0019887">
    <property type="term" value="F:protein kinase regulator activity"/>
    <property type="evidence" value="ECO:0000315"/>
    <property type="project" value="dictyBase"/>
</dbReference>
<dbReference type="GO" id="GO:0106310">
    <property type="term" value="F:protein serine kinase activity"/>
    <property type="evidence" value="ECO:0007669"/>
    <property type="project" value="RHEA"/>
</dbReference>
<dbReference type="GO" id="GO:0004674">
    <property type="term" value="F:protein serine/threonine kinase activity"/>
    <property type="evidence" value="ECO:0000250"/>
    <property type="project" value="dictyBase"/>
</dbReference>
<dbReference type="GO" id="GO:0010629">
    <property type="term" value="P:negative regulation of gene expression"/>
    <property type="evidence" value="ECO:0000315"/>
    <property type="project" value="dictyBase"/>
</dbReference>
<dbReference type="GO" id="GO:0010628">
    <property type="term" value="P:positive regulation of gene expression"/>
    <property type="evidence" value="ECO:0000315"/>
    <property type="project" value="dictyBase"/>
</dbReference>
<dbReference type="GO" id="GO:1901263">
    <property type="term" value="P:positive regulation of sorocarp spore cell differentiation"/>
    <property type="evidence" value="ECO:0000315"/>
    <property type="project" value="dictyBase"/>
</dbReference>
<dbReference type="GO" id="GO:0036211">
    <property type="term" value="P:protein modification process"/>
    <property type="evidence" value="ECO:0000314"/>
    <property type="project" value="dictyBase"/>
</dbReference>
<dbReference type="GO" id="GO:0031098">
    <property type="term" value="P:stress-activated protein kinase signaling cascade"/>
    <property type="evidence" value="ECO:0000315"/>
    <property type="project" value="dictyBase"/>
</dbReference>
<dbReference type="FunFam" id="1.10.510.10:FF:002498">
    <property type="entry name" value="Serine/threonine-protein kinase stk11 homolog"/>
    <property type="match status" value="1"/>
</dbReference>
<dbReference type="Gene3D" id="1.10.510.10">
    <property type="entry name" value="Transferase(Phosphotransferase) domain 1"/>
    <property type="match status" value="1"/>
</dbReference>
<dbReference type="InterPro" id="IPR011009">
    <property type="entry name" value="Kinase-like_dom_sf"/>
</dbReference>
<dbReference type="InterPro" id="IPR000719">
    <property type="entry name" value="Prot_kinase_dom"/>
</dbReference>
<dbReference type="InterPro" id="IPR017441">
    <property type="entry name" value="Protein_kinase_ATP_BS"/>
</dbReference>
<dbReference type="InterPro" id="IPR008271">
    <property type="entry name" value="Ser/Thr_kinase_AS"/>
</dbReference>
<dbReference type="PANTHER" id="PTHR24346">
    <property type="entry name" value="MAP/MICROTUBULE AFFINITY-REGULATING KINASE"/>
    <property type="match status" value="1"/>
</dbReference>
<dbReference type="PANTHER" id="PTHR24346:SF94">
    <property type="entry name" value="NON-SPECIFIC SERINE_THREONINE PROTEIN KINASE"/>
    <property type="match status" value="1"/>
</dbReference>
<dbReference type="Pfam" id="PF00069">
    <property type="entry name" value="Pkinase"/>
    <property type="match status" value="1"/>
</dbReference>
<dbReference type="SMART" id="SM00220">
    <property type="entry name" value="S_TKc"/>
    <property type="match status" value="1"/>
</dbReference>
<dbReference type="SUPFAM" id="SSF56112">
    <property type="entry name" value="Protein kinase-like (PK-like)"/>
    <property type="match status" value="1"/>
</dbReference>
<dbReference type="PROSITE" id="PS00107">
    <property type="entry name" value="PROTEIN_KINASE_ATP"/>
    <property type="match status" value="1"/>
</dbReference>
<dbReference type="PROSITE" id="PS50011">
    <property type="entry name" value="PROTEIN_KINASE_DOM"/>
    <property type="match status" value="1"/>
</dbReference>
<dbReference type="PROSITE" id="PS00108">
    <property type="entry name" value="PROTEIN_KINASE_ST"/>
    <property type="match status" value="1"/>
</dbReference>
<evidence type="ECO:0000250" key="1"/>
<evidence type="ECO:0000255" key="2">
    <source>
        <dbReference type="PROSITE-ProRule" id="PRU00159"/>
    </source>
</evidence>
<evidence type="ECO:0000255" key="3">
    <source>
        <dbReference type="PROSITE-ProRule" id="PRU10027"/>
    </source>
</evidence>
<evidence type="ECO:0000256" key="4">
    <source>
        <dbReference type="SAM" id="MobiDB-lite"/>
    </source>
</evidence>
<evidence type="ECO:0000305" key="5"/>
<name>STK11_DICDI</name>